<organism>
    <name type="scientific">Bacteroides thetaiotaomicron (strain ATCC 29148 / DSM 2079 / JCM 5827 / CCUG 10774 / NCTC 10582 / VPI-5482 / E50)</name>
    <dbReference type="NCBI Taxonomy" id="226186"/>
    <lineage>
        <taxon>Bacteria</taxon>
        <taxon>Pseudomonadati</taxon>
        <taxon>Bacteroidota</taxon>
        <taxon>Bacteroidia</taxon>
        <taxon>Bacteroidales</taxon>
        <taxon>Bacteroidaceae</taxon>
        <taxon>Bacteroides</taxon>
    </lineage>
</organism>
<keyword id="KW-0143">Chaperone</keyword>
<keyword id="KW-0963">Cytoplasm</keyword>
<keyword id="KW-0235">DNA replication</keyword>
<keyword id="KW-0479">Metal-binding</keyword>
<keyword id="KW-1185">Reference proteome</keyword>
<keyword id="KW-0677">Repeat</keyword>
<keyword id="KW-0346">Stress response</keyword>
<keyword id="KW-0862">Zinc</keyword>
<keyword id="KW-0863">Zinc-finger</keyword>
<sequence>MAEKRDYYEVLEVTKTATVEEIKKAYRKKAIQYHPDKNPGDKEAEEKFKEAAEAYDVLSNPDKRSRYDQFGHAGVSGAAGNGGPFGGFGGEGMSMDDIFSMFGDIFGGRGGGFSGGFGGFSGFGGGGGGSQQRRYRGSDLRVKVKMTLKEISTGVEKKFKLKKYVPCNHCHGTGAEGDGGSETCPTCKGSGSVIRNQQTILGTMQTRTTCPTCNGEGKIIKNKCKECGGDGIVYGEEVVTVKIPAGVAEGMQLSMGGKGNAGKHNGVPGDLLILVEEEPHPDLIRDENDLIYNLLLSFPTAALGGAVEIPTIDGKVKVKIDSGTQPGKVLRLRGKGLPNVNGYGTGDLLVNISIYVPEALNKEEKSTLEKMEASDNFKPSTSVKEKIFKKFKSFFD</sequence>
<proteinExistence type="inferred from homology"/>
<accession>Q8A8C3</accession>
<dbReference type="EMBL" id="AE015928">
    <property type="protein sequence ID" value="AAO76351.1"/>
    <property type="molecule type" value="Genomic_DNA"/>
</dbReference>
<dbReference type="RefSeq" id="NP_810157.1">
    <property type="nucleotide sequence ID" value="NC_004663.1"/>
</dbReference>
<dbReference type="RefSeq" id="WP_008763399.1">
    <property type="nucleotide sequence ID" value="NZ_UYXG01000031.1"/>
</dbReference>
<dbReference type="SMR" id="Q8A8C3"/>
<dbReference type="FunCoup" id="Q8A8C3">
    <property type="interactions" value="564"/>
</dbReference>
<dbReference type="STRING" id="226186.BT_1244"/>
<dbReference type="PaxDb" id="226186-BT_1244"/>
<dbReference type="EnsemblBacteria" id="AAO76351">
    <property type="protein sequence ID" value="AAO76351"/>
    <property type="gene ID" value="BT_1244"/>
</dbReference>
<dbReference type="GeneID" id="60927222"/>
<dbReference type="KEGG" id="bth:BT_1244"/>
<dbReference type="PATRIC" id="fig|226186.12.peg.1270"/>
<dbReference type="eggNOG" id="COG0484">
    <property type="taxonomic scope" value="Bacteria"/>
</dbReference>
<dbReference type="HOGENOM" id="CLU_017633_0_7_10"/>
<dbReference type="InParanoid" id="Q8A8C3"/>
<dbReference type="OrthoDB" id="9779889at2"/>
<dbReference type="Proteomes" id="UP000001414">
    <property type="component" value="Chromosome"/>
</dbReference>
<dbReference type="GO" id="GO:0005737">
    <property type="term" value="C:cytoplasm"/>
    <property type="evidence" value="ECO:0000318"/>
    <property type="project" value="GO_Central"/>
</dbReference>
<dbReference type="GO" id="GO:0005524">
    <property type="term" value="F:ATP binding"/>
    <property type="evidence" value="ECO:0007669"/>
    <property type="project" value="InterPro"/>
</dbReference>
<dbReference type="GO" id="GO:0031072">
    <property type="term" value="F:heat shock protein binding"/>
    <property type="evidence" value="ECO:0007669"/>
    <property type="project" value="InterPro"/>
</dbReference>
<dbReference type="GO" id="GO:0051082">
    <property type="term" value="F:unfolded protein binding"/>
    <property type="evidence" value="ECO:0000318"/>
    <property type="project" value="GO_Central"/>
</dbReference>
<dbReference type="GO" id="GO:0008270">
    <property type="term" value="F:zinc ion binding"/>
    <property type="evidence" value="ECO:0007669"/>
    <property type="project" value="UniProtKB-UniRule"/>
</dbReference>
<dbReference type="GO" id="GO:0051085">
    <property type="term" value="P:chaperone cofactor-dependent protein refolding"/>
    <property type="evidence" value="ECO:0000318"/>
    <property type="project" value="GO_Central"/>
</dbReference>
<dbReference type="GO" id="GO:0006260">
    <property type="term" value="P:DNA replication"/>
    <property type="evidence" value="ECO:0007669"/>
    <property type="project" value="UniProtKB-KW"/>
</dbReference>
<dbReference type="GO" id="GO:0042026">
    <property type="term" value="P:protein refolding"/>
    <property type="evidence" value="ECO:0000318"/>
    <property type="project" value="GO_Central"/>
</dbReference>
<dbReference type="GO" id="GO:0009408">
    <property type="term" value="P:response to heat"/>
    <property type="evidence" value="ECO:0007669"/>
    <property type="project" value="InterPro"/>
</dbReference>
<dbReference type="CDD" id="cd06257">
    <property type="entry name" value="DnaJ"/>
    <property type="match status" value="1"/>
</dbReference>
<dbReference type="CDD" id="cd10747">
    <property type="entry name" value="DnaJ_C"/>
    <property type="match status" value="1"/>
</dbReference>
<dbReference type="CDD" id="cd10719">
    <property type="entry name" value="DnaJ_zf"/>
    <property type="match status" value="1"/>
</dbReference>
<dbReference type="FunFam" id="1.10.287.110:FF:000034">
    <property type="entry name" value="Chaperone protein DnaJ"/>
    <property type="match status" value="1"/>
</dbReference>
<dbReference type="FunFam" id="2.60.260.20:FF:000005">
    <property type="entry name" value="Chaperone protein dnaJ 1, mitochondrial"/>
    <property type="match status" value="1"/>
</dbReference>
<dbReference type="FunFam" id="2.10.230.10:FF:000002">
    <property type="entry name" value="Molecular chaperone DnaJ"/>
    <property type="match status" value="1"/>
</dbReference>
<dbReference type="Gene3D" id="1.10.287.110">
    <property type="entry name" value="DnaJ domain"/>
    <property type="match status" value="1"/>
</dbReference>
<dbReference type="Gene3D" id="2.10.230.10">
    <property type="entry name" value="Heat shock protein DnaJ, cysteine-rich domain"/>
    <property type="match status" value="1"/>
</dbReference>
<dbReference type="Gene3D" id="2.60.260.20">
    <property type="entry name" value="Urease metallochaperone UreE, N-terminal domain"/>
    <property type="match status" value="2"/>
</dbReference>
<dbReference type="HAMAP" id="MF_01152">
    <property type="entry name" value="DnaJ"/>
    <property type="match status" value="1"/>
</dbReference>
<dbReference type="InterPro" id="IPR012724">
    <property type="entry name" value="DnaJ"/>
</dbReference>
<dbReference type="InterPro" id="IPR002939">
    <property type="entry name" value="DnaJ_C"/>
</dbReference>
<dbReference type="InterPro" id="IPR001623">
    <property type="entry name" value="DnaJ_domain"/>
</dbReference>
<dbReference type="InterPro" id="IPR018253">
    <property type="entry name" value="DnaJ_domain_CS"/>
</dbReference>
<dbReference type="InterPro" id="IPR008971">
    <property type="entry name" value="HSP40/DnaJ_pept-bd"/>
</dbReference>
<dbReference type="InterPro" id="IPR001305">
    <property type="entry name" value="HSP_DnaJ_Cys-rich_dom"/>
</dbReference>
<dbReference type="InterPro" id="IPR036410">
    <property type="entry name" value="HSP_DnaJ_Cys-rich_dom_sf"/>
</dbReference>
<dbReference type="InterPro" id="IPR036869">
    <property type="entry name" value="J_dom_sf"/>
</dbReference>
<dbReference type="NCBIfam" id="TIGR02349">
    <property type="entry name" value="DnaJ_bact"/>
    <property type="match status" value="1"/>
</dbReference>
<dbReference type="NCBIfam" id="NF008035">
    <property type="entry name" value="PRK10767.1"/>
    <property type="match status" value="1"/>
</dbReference>
<dbReference type="NCBIfam" id="NF010882">
    <property type="entry name" value="PRK14289.1"/>
    <property type="match status" value="1"/>
</dbReference>
<dbReference type="PANTHER" id="PTHR43096:SF48">
    <property type="entry name" value="CHAPERONE PROTEIN DNAJ"/>
    <property type="match status" value="1"/>
</dbReference>
<dbReference type="PANTHER" id="PTHR43096">
    <property type="entry name" value="DNAJ HOMOLOG 1, MITOCHONDRIAL-RELATED"/>
    <property type="match status" value="1"/>
</dbReference>
<dbReference type="Pfam" id="PF00226">
    <property type="entry name" value="DnaJ"/>
    <property type="match status" value="1"/>
</dbReference>
<dbReference type="Pfam" id="PF01556">
    <property type="entry name" value="DnaJ_C"/>
    <property type="match status" value="1"/>
</dbReference>
<dbReference type="Pfam" id="PF00684">
    <property type="entry name" value="DnaJ_CXXCXGXG"/>
    <property type="match status" value="1"/>
</dbReference>
<dbReference type="PRINTS" id="PR00625">
    <property type="entry name" value="JDOMAIN"/>
</dbReference>
<dbReference type="SMART" id="SM00271">
    <property type="entry name" value="DnaJ"/>
    <property type="match status" value="1"/>
</dbReference>
<dbReference type="SUPFAM" id="SSF46565">
    <property type="entry name" value="Chaperone J-domain"/>
    <property type="match status" value="1"/>
</dbReference>
<dbReference type="SUPFAM" id="SSF57938">
    <property type="entry name" value="DnaJ/Hsp40 cysteine-rich domain"/>
    <property type="match status" value="1"/>
</dbReference>
<dbReference type="SUPFAM" id="SSF49493">
    <property type="entry name" value="HSP40/DnaJ peptide-binding domain"/>
    <property type="match status" value="2"/>
</dbReference>
<dbReference type="PROSITE" id="PS00636">
    <property type="entry name" value="DNAJ_1"/>
    <property type="match status" value="1"/>
</dbReference>
<dbReference type="PROSITE" id="PS50076">
    <property type="entry name" value="DNAJ_2"/>
    <property type="match status" value="1"/>
</dbReference>
<dbReference type="PROSITE" id="PS51188">
    <property type="entry name" value="ZF_CR"/>
    <property type="match status" value="1"/>
</dbReference>
<comment type="function">
    <text evidence="1">Participates actively in the response to hyperosmotic and heat shock by preventing the aggregation of stress-denatured proteins and by disaggregating proteins, also in an autonomous, DnaK-independent fashion. Unfolded proteins bind initially to DnaJ; upon interaction with the DnaJ-bound protein, DnaK hydrolyzes its bound ATP, resulting in the formation of a stable complex. GrpE releases ADP from DnaK; ATP binding to DnaK triggers the release of the substrate protein, thus completing the reaction cycle. Several rounds of ATP-dependent interactions between DnaJ, DnaK and GrpE are required for fully efficient folding. Also involved, together with DnaK and GrpE, in the DNA replication of plasmids through activation of initiation proteins.</text>
</comment>
<comment type="cofactor">
    <cofactor evidence="1">
        <name>Zn(2+)</name>
        <dbReference type="ChEBI" id="CHEBI:29105"/>
    </cofactor>
    <text evidence="1">Binds 2 Zn(2+) ions per monomer.</text>
</comment>
<comment type="subunit">
    <text evidence="1">Homodimer.</text>
</comment>
<comment type="subcellular location">
    <subcellularLocation>
        <location evidence="1">Cytoplasm</location>
    </subcellularLocation>
</comment>
<comment type="domain">
    <text evidence="1">The J domain is necessary and sufficient to stimulate DnaK ATPase activity. Zinc center 1 plays an important role in the autonomous, DnaK-independent chaperone activity of DnaJ. Zinc center 2 is essential for interaction with DnaK and for DnaJ activity.</text>
</comment>
<comment type="similarity">
    <text evidence="1">Belongs to the DnaJ family.</text>
</comment>
<reference key="1">
    <citation type="journal article" date="2003" name="Science">
        <title>A genomic view of the human-Bacteroides thetaiotaomicron symbiosis.</title>
        <authorList>
            <person name="Xu J."/>
            <person name="Bjursell M.K."/>
            <person name="Himrod J."/>
            <person name="Deng S."/>
            <person name="Carmichael L.K."/>
            <person name="Chiang H.C."/>
            <person name="Hooper L.V."/>
            <person name="Gordon J.I."/>
        </authorList>
    </citation>
    <scope>NUCLEOTIDE SEQUENCE [LARGE SCALE GENOMIC DNA]</scope>
    <source>
        <strain>ATCC 29148 / DSM 2079 / JCM 5827 / CCUG 10774 / NCTC 10582 / VPI-5482 / E50</strain>
    </source>
</reference>
<evidence type="ECO:0000255" key="1">
    <source>
        <dbReference type="HAMAP-Rule" id="MF_01152"/>
    </source>
</evidence>
<gene>
    <name evidence="1" type="primary">dnaJ</name>
    <name type="ordered locus">BT_1244</name>
</gene>
<feature type="chain" id="PRO_0000070728" description="Chaperone protein DnaJ">
    <location>
        <begin position="1"/>
        <end position="396"/>
    </location>
</feature>
<feature type="domain" description="J" evidence="1">
    <location>
        <begin position="6"/>
        <end position="71"/>
    </location>
</feature>
<feature type="repeat" description="CXXCXGXG motif">
    <location>
        <begin position="167"/>
        <end position="174"/>
    </location>
</feature>
<feature type="repeat" description="CXXCXGXG motif">
    <location>
        <begin position="184"/>
        <end position="191"/>
    </location>
</feature>
<feature type="repeat" description="CXXCXGXG motif">
    <location>
        <begin position="210"/>
        <end position="217"/>
    </location>
</feature>
<feature type="repeat" description="CXXCXGXG motif">
    <location>
        <begin position="224"/>
        <end position="231"/>
    </location>
</feature>
<feature type="zinc finger region" description="CR-type" evidence="1">
    <location>
        <begin position="154"/>
        <end position="236"/>
    </location>
</feature>
<feature type="binding site" evidence="1">
    <location>
        <position position="167"/>
    </location>
    <ligand>
        <name>Zn(2+)</name>
        <dbReference type="ChEBI" id="CHEBI:29105"/>
        <label>1</label>
    </ligand>
</feature>
<feature type="binding site" evidence="1">
    <location>
        <position position="170"/>
    </location>
    <ligand>
        <name>Zn(2+)</name>
        <dbReference type="ChEBI" id="CHEBI:29105"/>
        <label>1</label>
    </ligand>
</feature>
<feature type="binding site" evidence="1">
    <location>
        <position position="184"/>
    </location>
    <ligand>
        <name>Zn(2+)</name>
        <dbReference type="ChEBI" id="CHEBI:29105"/>
        <label>2</label>
    </ligand>
</feature>
<feature type="binding site" evidence="1">
    <location>
        <position position="187"/>
    </location>
    <ligand>
        <name>Zn(2+)</name>
        <dbReference type="ChEBI" id="CHEBI:29105"/>
        <label>2</label>
    </ligand>
</feature>
<feature type="binding site" evidence="1">
    <location>
        <position position="210"/>
    </location>
    <ligand>
        <name>Zn(2+)</name>
        <dbReference type="ChEBI" id="CHEBI:29105"/>
        <label>2</label>
    </ligand>
</feature>
<feature type="binding site" evidence="1">
    <location>
        <position position="213"/>
    </location>
    <ligand>
        <name>Zn(2+)</name>
        <dbReference type="ChEBI" id="CHEBI:29105"/>
        <label>2</label>
    </ligand>
</feature>
<feature type="binding site" evidence="1">
    <location>
        <position position="224"/>
    </location>
    <ligand>
        <name>Zn(2+)</name>
        <dbReference type="ChEBI" id="CHEBI:29105"/>
        <label>1</label>
    </ligand>
</feature>
<feature type="binding site" evidence="1">
    <location>
        <position position="227"/>
    </location>
    <ligand>
        <name>Zn(2+)</name>
        <dbReference type="ChEBI" id="CHEBI:29105"/>
        <label>1</label>
    </ligand>
</feature>
<name>DNAJ_BACTN</name>
<protein>
    <recommendedName>
        <fullName evidence="1">Chaperone protein DnaJ</fullName>
    </recommendedName>
</protein>